<dbReference type="EC" id="4.98.1.1" evidence="1"/>
<dbReference type="EMBL" id="CP001340">
    <property type="protein sequence ID" value="ACL97343.1"/>
    <property type="molecule type" value="Genomic_DNA"/>
</dbReference>
<dbReference type="RefSeq" id="WP_010921589.1">
    <property type="nucleotide sequence ID" value="NC_011916.1"/>
</dbReference>
<dbReference type="RefSeq" id="YP_002519251.1">
    <property type="nucleotide sequence ID" value="NC_011916.1"/>
</dbReference>
<dbReference type="SMR" id="B8GW40"/>
<dbReference type="GeneID" id="7332726"/>
<dbReference type="KEGG" id="ccs:CCNA_03878"/>
<dbReference type="PATRIC" id="fig|565050.3.peg.3783"/>
<dbReference type="HOGENOM" id="CLU_018884_4_1_5"/>
<dbReference type="OrthoDB" id="9809741at2"/>
<dbReference type="PhylomeDB" id="B8GW40"/>
<dbReference type="UniPathway" id="UPA00252">
    <property type="reaction ID" value="UER00325"/>
</dbReference>
<dbReference type="Proteomes" id="UP000001364">
    <property type="component" value="Chromosome"/>
</dbReference>
<dbReference type="GO" id="GO:0005737">
    <property type="term" value="C:cytoplasm"/>
    <property type="evidence" value="ECO:0007669"/>
    <property type="project" value="UniProtKB-SubCell"/>
</dbReference>
<dbReference type="GO" id="GO:0004325">
    <property type="term" value="F:ferrochelatase activity"/>
    <property type="evidence" value="ECO:0007669"/>
    <property type="project" value="UniProtKB-UniRule"/>
</dbReference>
<dbReference type="GO" id="GO:0046872">
    <property type="term" value="F:metal ion binding"/>
    <property type="evidence" value="ECO:0007669"/>
    <property type="project" value="UniProtKB-KW"/>
</dbReference>
<dbReference type="GO" id="GO:0006783">
    <property type="term" value="P:heme biosynthetic process"/>
    <property type="evidence" value="ECO:0007669"/>
    <property type="project" value="UniProtKB-UniRule"/>
</dbReference>
<dbReference type="CDD" id="cd00419">
    <property type="entry name" value="Ferrochelatase_C"/>
    <property type="match status" value="1"/>
</dbReference>
<dbReference type="CDD" id="cd03411">
    <property type="entry name" value="Ferrochelatase_N"/>
    <property type="match status" value="1"/>
</dbReference>
<dbReference type="Gene3D" id="3.40.50.1400">
    <property type="match status" value="2"/>
</dbReference>
<dbReference type="HAMAP" id="MF_00323">
    <property type="entry name" value="Ferrochelatase"/>
    <property type="match status" value="1"/>
</dbReference>
<dbReference type="InterPro" id="IPR001015">
    <property type="entry name" value="Ferrochelatase"/>
</dbReference>
<dbReference type="InterPro" id="IPR019772">
    <property type="entry name" value="Ferrochelatase_AS"/>
</dbReference>
<dbReference type="InterPro" id="IPR033644">
    <property type="entry name" value="Ferrochelatase_C"/>
</dbReference>
<dbReference type="InterPro" id="IPR033659">
    <property type="entry name" value="Ferrochelatase_N"/>
</dbReference>
<dbReference type="NCBIfam" id="TIGR00109">
    <property type="entry name" value="hemH"/>
    <property type="match status" value="1"/>
</dbReference>
<dbReference type="PANTHER" id="PTHR11108">
    <property type="entry name" value="FERROCHELATASE"/>
    <property type="match status" value="1"/>
</dbReference>
<dbReference type="PANTHER" id="PTHR11108:SF1">
    <property type="entry name" value="FERROCHELATASE, MITOCHONDRIAL"/>
    <property type="match status" value="1"/>
</dbReference>
<dbReference type="Pfam" id="PF00762">
    <property type="entry name" value="Ferrochelatase"/>
    <property type="match status" value="1"/>
</dbReference>
<dbReference type="SUPFAM" id="SSF53800">
    <property type="entry name" value="Chelatase"/>
    <property type="match status" value="1"/>
</dbReference>
<dbReference type="PROSITE" id="PS00534">
    <property type="entry name" value="FERROCHELATASE"/>
    <property type="match status" value="1"/>
</dbReference>
<sequence length="347" mass="37121">MTQKLAVVLFNLGGPDGPDAVRPFLFNLFRDPAIIGAPALIRYPLAALISTTREKSAKANYAIMGGGSPLLPETEKQARALEAALALAMPGVEAKCFIAMRYWHPLTDETARQVAAFAPDQVVLLPLYPQFSTTTTGSSLKAWKKTYKGSGVQTTVGCYPTEGGLIEAHARMIRESWEKAGSPTNIRLLFSAHGLPEKVILAGDPYQKQVEATAAAVAAHLPPQIEWTVCYQSRVGPLKWIGPSTDDEIRRAGGEDKGVMITPIAFVSEHVETLVELDHEYAELAEEVGAAPYLRVSALGTAPEFIDGLAKAVRDSVGKAPGTVSSACGWRCGADWSKCPCREGASA</sequence>
<proteinExistence type="inferred from homology"/>
<accession>B8GW40</accession>
<reference key="1">
    <citation type="journal article" date="2010" name="J. Bacteriol.">
        <title>The genetic basis of laboratory adaptation in Caulobacter crescentus.</title>
        <authorList>
            <person name="Marks M.E."/>
            <person name="Castro-Rojas C.M."/>
            <person name="Teiling C."/>
            <person name="Du L."/>
            <person name="Kapatral V."/>
            <person name="Walunas T.L."/>
            <person name="Crosson S."/>
        </authorList>
    </citation>
    <scope>NUCLEOTIDE SEQUENCE [LARGE SCALE GENOMIC DNA]</scope>
    <source>
        <strain>NA1000 / CB15N</strain>
    </source>
</reference>
<protein>
    <recommendedName>
        <fullName evidence="1">Ferrochelatase</fullName>
        <ecNumber evidence="1">4.98.1.1</ecNumber>
    </recommendedName>
    <alternativeName>
        <fullName evidence="1">Heme synthase</fullName>
    </alternativeName>
    <alternativeName>
        <fullName evidence="1">Protoheme ferro-lyase</fullName>
    </alternativeName>
</protein>
<organism>
    <name type="scientific">Caulobacter vibrioides (strain NA1000 / CB15N)</name>
    <name type="common">Caulobacter crescentus</name>
    <dbReference type="NCBI Taxonomy" id="565050"/>
    <lineage>
        <taxon>Bacteria</taxon>
        <taxon>Pseudomonadati</taxon>
        <taxon>Pseudomonadota</taxon>
        <taxon>Alphaproteobacteria</taxon>
        <taxon>Caulobacterales</taxon>
        <taxon>Caulobacteraceae</taxon>
        <taxon>Caulobacter</taxon>
    </lineage>
</organism>
<gene>
    <name evidence="1" type="primary">hemH</name>
    <name type="ordered locus">CCNA_03878</name>
</gene>
<keyword id="KW-0963">Cytoplasm</keyword>
<keyword id="KW-0350">Heme biosynthesis</keyword>
<keyword id="KW-0408">Iron</keyword>
<keyword id="KW-0456">Lyase</keyword>
<keyword id="KW-0479">Metal-binding</keyword>
<keyword id="KW-0627">Porphyrin biosynthesis</keyword>
<keyword id="KW-1185">Reference proteome</keyword>
<feature type="chain" id="PRO_1000189981" description="Ferrochelatase">
    <location>
        <begin position="1"/>
        <end position="347"/>
    </location>
</feature>
<feature type="binding site" evidence="1">
    <location>
        <position position="193"/>
    </location>
    <ligand>
        <name>Fe cation</name>
        <dbReference type="ChEBI" id="CHEBI:24875"/>
    </ligand>
</feature>
<feature type="binding site" evidence="1">
    <location>
        <position position="272"/>
    </location>
    <ligand>
        <name>Fe cation</name>
        <dbReference type="ChEBI" id="CHEBI:24875"/>
    </ligand>
</feature>
<evidence type="ECO:0000255" key="1">
    <source>
        <dbReference type="HAMAP-Rule" id="MF_00323"/>
    </source>
</evidence>
<comment type="function">
    <text evidence="1">Catalyzes the ferrous insertion into protoporphyrin IX.</text>
</comment>
<comment type="catalytic activity">
    <reaction evidence="1">
        <text>heme b + 2 H(+) = protoporphyrin IX + Fe(2+)</text>
        <dbReference type="Rhea" id="RHEA:22584"/>
        <dbReference type="ChEBI" id="CHEBI:15378"/>
        <dbReference type="ChEBI" id="CHEBI:29033"/>
        <dbReference type="ChEBI" id="CHEBI:57306"/>
        <dbReference type="ChEBI" id="CHEBI:60344"/>
        <dbReference type="EC" id="4.98.1.1"/>
    </reaction>
</comment>
<comment type="pathway">
    <text evidence="1">Porphyrin-containing compound metabolism; protoheme biosynthesis; protoheme from protoporphyrin-IX: step 1/1.</text>
</comment>
<comment type="subcellular location">
    <subcellularLocation>
        <location evidence="1">Cytoplasm</location>
    </subcellularLocation>
</comment>
<comment type="similarity">
    <text evidence="1">Belongs to the ferrochelatase family.</text>
</comment>
<name>HEMH_CAUVN</name>